<gene>
    <name evidence="1" type="primary">ileS</name>
    <name type="ordered locus">MMOB4070</name>
</gene>
<dbReference type="EC" id="6.1.1.5" evidence="1"/>
<dbReference type="EMBL" id="AE017308">
    <property type="protein sequence ID" value="AAT27893.1"/>
    <property type="molecule type" value="Genomic_DNA"/>
</dbReference>
<dbReference type="RefSeq" id="WP_011264927.1">
    <property type="nucleotide sequence ID" value="NC_006908.1"/>
</dbReference>
<dbReference type="SMR" id="Q6KHN7"/>
<dbReference type="STRING" id="267748.MMOB4070"/>
<dbReference type="KEGG" id="mmo:MMOB4070"/>
<dbReference type="eggNOG" id="COG0060">
    <property type="taxonomic scope" value="Bacteria"/>
</dbReference>
<dbReference type="HOGENOM" id="CLU_001493_7_1_14"/>
<dbReference type="OrthoDB" id="9810365at2"/>
<dbReference type="Proteomes" id="UP000009072">
    <property type="component" value="Chromosome"/>
</dbReference>
<dbReference type="GO" id="GO:0005829">
    <property type="term" value="C:cytosol"/>
    <property type="evidence" value="ECO:0007669"/>
    <property type="project" value="TreeGrafter"/>
</dbReference>
<dbReference type="GO" id="GO:0002161">
    <property type="term" value="F:aminoacyl-tRNA deacylase activity"/>
    <property type="evidence" value="ECO:0007669"/>
    <property type="project" value="InterPro"/>
</dbReference>
<dbReference type="GO" id="GO:0005524">
    <property type="term" value="F:ATP binding"/>
    <property type="evidence" value="ECO:0007669"/>
    <property type="project" value="UniProtKB-UniRule"/>
</dbReference>
<dbReference type="GO" id="GO:0004822">
    <property type="term" value="F:isoleucine-tRNA ligase activity"/>
    <property type="evidence" value="ECO:0007669"/>
    <property type="project" value="UniProtKB-UniRule"/>
</dbReference>
<dbReference type="GO" id="GO:0000049">
    <property type="term" value="F:tRNA binding"/>
    <property type="evidence" value="ECO:0007669"/>
    <property type="project" value="InterPro"/>
</dbReference>
<dbReference type="GO" id="GO:0008270">
    <property type="term" value="F:zinc ion binding"/>
    <property type="evidence" value="ECO:0007669"/>
    <property type="project" value="UniProtKB-UniRule"/>
</dbReference>
<dbReference type="GO" id="GO:0006428">
    <property type="term" value="P:isoleucyl-tRNA aminoacylation"/>
    <property type="evidence" value="ECO:0007669"/>
    <property type="project" value="UniProtKB-UniRule"/>
</dbReference>
<dbReference type="CDD" id="cd07960">
    <property type="entry name" value="Anticodon_Ia_Ile_BEm"/>
    <property type="match status" value="1"/>
</dbReference>
<dbReference type="CDD" id="cd00818">
    <property type="entry name" value="IleRS_core"/>
    <property type="match status" value="1"/>
</dbReference>
<dbReference type="FunFam" id="3.40.50.620:FF:000152">
    <property type="entry name" value="Isoleucine--tRNA ligase"/>
    <property type="match status" value="1"/>
</dbReference>
<dbReference type="Gene3D" id="1.10.730.20">
    <property type="match status" value="1"/>
</dbReference>
<dbReference type="Gene3D" id="3.40.50.620">
    <property type="entry name" value="HUPs"/>
    <property type="match status" value="2"/>
</dbReference>
<dbReference type="Gene3D" id="1.10.10.830">
    <property type="entry name" value="Ile-tRNA synthetase CP2 domain-like"/>
    <property type="match status" value="1"/>
</dbReference>
<dbReference type="HAMAP" id="MF_02002">
    <property type="entry name" value="Ile_tRNA_synth_type1"/>
    <property type="match status" value="1"/>
</dbReference>
<dbReference type="InterPro" id="IPR001412">
    <property type="entry name" value="aa-tRNA-synth_I_CS"/>
</dbReference>
<dbReference type="InterPro" id="IPR002300">
    <property type="entry name" value="aa-tRNA-synth_Ia"/>
</dbReference>
<dbReference type="InterPro" id="IPR033708">
    <property type="entry name" value="Anticodon_Ile_BEm"/>
</dbReference>
<dbReference type="InterPro" id="IPR002301">
    <property type="entry name" value="Ile-tRNA-ligase"/>
</dbReference>
<dbReference type="InterPro" id="IPR023585">
    <property type="entry name" value="Ile-tRNA-ligase_type1"/>
</dbReference>
<dbReference type="InterPro" id="IPR050081">
    <property type="entry name" value="Ile-tRNA_ligase"/>
</dbReference>
<dbReference type="InterPro" id="IPR013155">
    <property type="entry name" value="M/V/L/I-tRNA-synth_anticd-bd"/>
</dbReference>
<dbReference type="InterPro" id="IPR014729">
    <property type="entry name" value="Rossmann-like_a/b/a_fold"/>
</dbReference>
<dbReference type="InterPro" id="IPR009080">
    <property type="entry name" value="tRNAsynth_Ia_anticodon-bd"/>
</dbReference>
<dbReference type="InterPro" id="IPR009008">
    <property type="entry name" value="Val/Leu/Ile-tRNA-synth_edit"/>
</dbReference>
<dbReference type="NCBIfam" id="TIGR00392">
    <property type="entry name" value="ileS"/>
    <property type="match status" value="1"/>
</dbReference>
<dbReference type="PANTHER" id="PTHR42765:SF1">
    <property type="entry name" value="ISOLEUCINE--TRNA LIGASE, MITOCHONDRIAL"/>
    <property type="match status" value="1"/>
</dbReference>
<dbReference type="PANTHER" id="PTHR42765">
    <property type="entry name" value="SOLEUCYL-TRNA SYNTHETASE"/>
    <property type="match status" value="1"/>
</dbReference>
<dbReference type="Pfam" id="PF08264">
    <property type="entry name" value="Anticodon_1"/>
    <property type="match status" value="1"/>
</dbReference>
<dbReference type="Pfam" id="PF00133">
    <property type="entry name" value="tRNA-synt_1"/>
    <property type="match status" value="1"/>
</dbReference>
<dbReference type="PRINTS" id="PR00984">
    <property type="entry name" value="TRNASYNTHILE"/>
</dbReference>
<dbReference type="SUPFAM" id="SSF47323">
    <property type="entry name" value="Anticodon-binding domain of a subclass of class I aminoacyl-tRNA synthetases"/>
    <property type="match status" value="1"/>
</dbReference>
<dbReference type="SUPFAM" id="SSF52374">
    <property type="entry name" value="Nucleotidylyl transferase"/>
    <property type="match status" value="1"/>
</dbReference>
<dbReference type="SUPFAM" id="SSF50677">
    <property type="entry name" value="ValRS/IleRS/LeuRS editing domain"/>
    <property type="match status" value="1"/>
</dbReference>
<dbReference type="PROSITE" id="PS00178">
    <property type="entry name" value="AA_TRNA_LIGASE_I"/>
    <property type="match status" value="1"/>
</dbReference>
<comment type="function">
    <text evidence="1">Catalyzes the attachment of isoleucine to tRNA(Ile). As IleRS can inadvertently accommodate and process structurally similar amino acids such as valine, to avoid such errors it has two additional distinct tRNA(Ile)-dependent editing activities. One activity is designated as 'pretransfer' editing and involves the hydrolysis of activated Val-AMP. The other activity is designated 'posttransfer' editing and involves deacylation of mischarged Val-tRNA(Ile).</text>
</comment>
<comment type="catalytic activity">
    <reaction evidence="1">
        <text>tRNA(Ile) + L-isoleucine + ATP = L-isoleucyl-tRNA(Ile) + AMP + diphosphate</text>
        <dbReference type="Rhea" id="RHEA:11060"/>
        <dbReference type="Rhea" id="RHEA-COMP:9666"/>
        <dbReference type="Rhea" id="RHEA-COMP:9695"/>
        <dbReference type="ChEBI" id="CHEBI:30616"/>
        <dbReference type="ChEBI" id="CHEBI:33019"/>
        <dbReference type="ChEBI" id="CHEBI:58045"/>
        <dbReference type="ChEBI" id="CHEBI:78442"/>
        <dbReference type="ChEBI" id="CHEBI:78528"/>
        <dbReference type="ChEBI" id="CHEBI:456215"/>
        <dbReference type="EC" id="6.1.1.5"/>
    </reaction>
</comment>
<comment type="cofactor">
    <cofactor evidence="1">
        <name>Zn(2+)</name>
        <dbReference type="ChEBI" id="CHEBI:29105"/>
    </cofactor>
    <text evidence="1">Binds 1 zinc ion per subunit.</text>
</comment>
<comment type="subunit">
    <text evidence="1">Monomer.</text>
</comment>
<comment type="subcellular location">
    <subcellularLocation>
        <location evidence="1">Cytoplasm</location>
    </subcellularLocation>
</comment>
<comment type="domain">
    <text evidence="1">IleRS has two distinct active sites: one for aminoacylation and one for editing. The misactivated valine is translocated from the active site to the editing site, which sterically excludes the correctly activated isoleucine. The single editing site contains two valyl binding pockets, one specific for each substrate (Val-AMP or Val-tRNA(Ile)).</text>
</comment>
<comment type="similarity">
    <text evidence="1">Belongs to the class-I aminoacyl-tRNA synthetase family. IleS type 1 subfamily.</text>
</comment>
<protein>
    <recommendedName>
        <fullName evidence="1">Isoleucine--tRNA ligase</fullName>
        <ecNumber evidence="1">6.1.1.5</ecNumber>
    </recommendedName>
    <alternativeName>
        <fullName evidence="1">Isoleucyl-tRNA synthetase</fullName>
        <shortName evidence="1">IleRS</shortName>
    </alternativeName>
</protein>
<keyword id="KW-0030">Aminoacyl-tRNA synthetase</keyword>
<keyword id="KW-0067">ATP-binding</keyword>
<keyword id="KW-0963">Cytoplasm</keyword>
<keyword id="KW-0436">Ligase</keyword>
<keyword id="KW-0479">Metal-binding</keyword>
<keyword id="KW-0547">Nucleotide-binding</keyword>
<keyword id="KW-0648">Protein biosynthesis</keyword>
<keyword id="KW-1185">Reference proteome</keyword>
<keyword id="KW-0862">Zinc</keyword>
<reference key="1">
    <citation type="journal article" date="2004" name="Genome Res.">
        <title>The complete genome and proteome of Mycoplasma mobile.</title>
        <authorList>
            <person name="Jaffe J.D."/>
            <person name="Stange-Thomann N."/>
            <person name="Smith C."/>
            <person name="DeCaprio D."/>
            <person name="Fisher S."/>
            <person name="Butler J."/>
            <person name="Calvo S."/>
            <person name="Elkins T."/>
            <person name="FitzGerald M.G."/>
            <person name="Hafez N."/>
            <person name="Kodira C.D."/>
            <person name="Major J."/>
            <person name="Wang S."/>
            <person name="Wilkinson J."/>
            <person name="Nicol R."/>
            <person name="Nusbaum C."/>
            <person name="Birren B."/>
            <person name="Berg H.C."/>
            <person name="Church G.M."/>
        </authorList>
    </citation>
    <scope>NUCLEOTIDE SEQUENCE [LARGE SCALE GENOMIC DNA]</scope>
    <source>
        <strain>ATCC 43663 / NCTC 11711 / 163 K</strain>
    </source>
</reference>
<evidence type="ECO:0000255" key="1">
    <source>
        <dbReference type="HAMAP-Rule" id="MF_02002"/>
    </source>
</evidence>
<feature type="chain" id="PRO_0000098421" description="Isoleucine--tRNA ligase">
    <location>
        <begin position="1"/>
        <end position="885"/>
    </location>
</feature>
<feature type="short sequence motif" description="'HIGH' region">
    <location>
        <begin position="59"/>
        <end position="69"/>
    </location>
</feature>
<feature type="short sequence motif" description="'KMSKS' region">
    <location>
        <begin position="591"/>
        <end position="595"/>
    </location>
</feature>
<feature type="binding site" evidence="1">
    <location>
        <position position="550"/>
    </location>
    <ligand>
        <name>L-isoleucyl-5'-AMP</name>
        <dbReference type="ChEBI" id="CHEBI:178002"/>
    </ligand>
</feature>
<feature type="binding site" evidence="1">
    <location>
        <position position="594"/>
    </location>
    <ligand>
        <name>ATP</name>
        <dbReference type="ChEBI" id="CHEBI:30616"/>
    </ligand>
</feature>
<feature type="binding site" evidence="1">
    <location>
        <position position="861"/>
    </location>
    <ligand>
        <name>Zn(2+)</name>
        <dbReference type="ChEBI" id="CHEBI:29105"/>
    </ligand>
</feature>
<feature type="binding site" evidence="1">
    <location>
        <position position="864"/>
    </location>
    <ligand>
        <name>Zn(2+)</name>
        <dbReference type="ChEBI" id="CHEBI:29105"/>
    </ligand>
</feature>
<feature type="binding site" evidence="1">
    <location>
        <position position="877"/>
    </location>
    <ligand>
        <name>Zn(2+)</name>
        <dbReference type="ChEBI" id="CHEBI:29105"/>
    </ligand>
</feature>
<feature type="binding site" evidence="1">
    <location>
        <position position="880"/>
    </location>
    <ligand>
        <name>Zn(2+)</name>
        <dbReference type="ChEBI" id="CHEBI:29105"/>
    </ligand>
</feature>
<sequence>MKNKYKETLNIPQDVLPMRANLIEKELKFKTFWDQNKIYQKALEKNKTNKPFILHDGPPYANGDLHIGHALNKILKDIVVRYKSLSGFYAPFVPGWDTHGLPIENKILKELKIDDHKNISTLELRKQAREYALSQIKNQKKQFLTMQLFSDFKDYYQTLDPKFEAEQLKVFKKMALDGLIYKSLQPVFWSPSSQSALAEAEVEYHEHKSHSIYTAFKIVKGNKFVEKNDFLVIWTTTPWTLIANSGVSVKEEFSYSKINYENKNYIFATDLVQKVTEIFGWKNFKIISSFQGKDLVGIEYQRPIKQEKTAPIVLGHHVTLESGSGLVHMAPLFGLDDFIIGRVEKLEEIMHINDDGSINEFGNQFANKFYWDANPEINEFLKQNNLLLHHSFLYHSYPHDWRTNKPVIYRGSNQWFVSIDPIKEKITKSIEHVESYPTWGISRLKTMIDNRTSWTISRQRAWGVPIPIFYNEKNEPVFEEELFDHIIDLVSKYGTDIWFEKSTDELLPEKYKNKNWTKEKDIMDVWFDSGTTSMGVKIEGAPVPWDVYLEGSDQYRGWFNSSLINSVVYYNQAPFKKLVSHGFVLDEKGNKMSKSKGNVVLPQEIISKFGADILRLWVANSEYTSDVTIGENIINQNVEIYRKFRNTFRFLIANLVDFDYKKDLKELTGIHLLIKEQLETLKFNTKIAYENFQFTNVIKLTNNFVYNLSSFYLDFSKDILYANKIEDLQRKMIQTNFYNITKTLLLILAPILPTTIEEVYQIFDQANKKESVHLENFFGISSIETIQEEKWNSFFELKNKVYALIEIAIKDKLIKSANQALVYIKETDEFLKTLDLKNLLMVGKVIFSKENKIENYEGHLCERCRIYFDFIDKDNLCVRCSKVIL</sequence>
<name>SYI_MYCM1</name>
<accession>Q6KHN7</accession>
<organism>
    <name type="scientific">Mycoplasma mobile (strain ATCC 43663 / 163K / NCTC 11711)</name>
    <name type="common">Mesomycoplasma mobile</name>
    <dbReference type="NCBI Taxonomy" id="267748"/>
    <lineage>
        <taxon>Bacteria</taxon>
        <taxon>Bacillati</taxon>
        <taxon>Mycoplasmatota</taxon>
        <taxon>Mycoplasmoidales</taxon>
        <taxon>Metamycoplasmataceae</taxon>
        <taxon>Mesomycoplasma</taxon>
    </lineage>
</organism>
<proteinExistence type="inferred from homology"/>